<dbReference type="EMBL" id="CP000103">
    <property type="protein sequence ID" value="ABB73509.1"/>
    <property type="molecule type" value="Genomic_DNA"/>
</dbReference>
<dbReference type="RefSeq" id="WP_011379563.1">
    <property type="nucleotide sequence ID" value="NC_007614.1"/>
</dbReference>
<dbReference type="STRING" id="323848.Nmul_A0201"/>
<dbReference type="KEGG" id="nmu:Nmul_A0201"/>
<dbReference type="eggNOG" id="COG3158">
    <property type="taxonomic scope" value="Bacteria"/>
</dbReference>
<dbReference type="HOGENOM" id="CLU_008142_4_2_4"/>
<dbReference type="OrthoDB" id="9805577at2"/>
<dbReference type="Proteomes" id="UP000002718">
    <property type="component" value="Chromosome"/>
</dbReference>
<dbReference type="GO" id="GO:0005886">
    <property type="term" value="C:plasma membrane"/>
    <property type="evidence" value="ECO:0007669"/>
    <property type="project" value="UniProtKB-SubCell"/>
</dbReference>
<dbReference type="GO" id="GO:0015079">
    <property type="term" value="F:potassium ion transmembrane transporter activity"/>
    <property type="evidence" value="ECO:0007669"/>
    <property type="project" value="UniProtKB-UniRule"/>
</dbReference>
<dbReference type="GO" id="GO:0015293">
    <property type="term" value="F:symporter activity"/>
    <property type="evidence" value="ECO:0007669"/>
    <property type="project" value="UniProtKB-UniRule"/>
</dbReference>
<dbReference type="HAMAP" id="MF_01522">
    <property type="entry name" value="Kup"/>
    <property type="match status" value="1"/>
</dbReference>
<dbReference type="InterPro" id="IPR003855">
    <property type="entry name" value="K+_transporter"/>
</dbReference>
<dbReference type="InterPro" id="IPR053952">
    <property type="entry name" value="K_trans_C"/>
</dbReference>
<dbReference type="InterPro" id="IPR053951">
    <property type="entry name" value="K_trans_N"/>
</dbReference>
<dbReference type="InterPro" id="IPR023051">
    <property type="entry name" value="Kup"/>
</dbReference>
<dbReference type="PANTHER" id="PTHR30540:SF79">
    <property type="entry name" value="LOW AFFINITY POTASSIUM TRANSPORT SYSTEM PROTEIN KUP"/>
    <property type="match status" value="1"/>
</dbReference>
<dbReference type="PANTHER" id="PTHR30540">
    <property type="entry name" value="OSMOTIC STRESS POTASSIUM TRANSPORTER"/>
    <property type="match status" value="1"/>
</dbReference>
<dbReference type="Pfam" id="PF02705">
    <property type="entry name" value="K_trans"/>
    <property type="match status" value="1"/>
</dbReference>
<dbReference type="Pfam" id="PF22776">
    <property type="entry name" value="K_trans_C"/>
    <property type="match status" value="1"/>
</dbReference>
<comment type="function">
    <text evidence="1">Transport of potassium into the cell. Likely operates as a K(+):H(+) symporter.</text>
</comment>
<comment type="catalytic activity">
    <reaction evidence="1">
        <text>K(+)(in) + H(+)(in) = K(+)(out) + H(+)(out)</text>
        <dbReference type="Rhea" id="RHEA:28490"/>
        <dbReference type="ChEBI" id="CHEBI:15378"/>
        <dbReference type="ChEBI" id="CHEBI:29103"/>
    </reaction>
    <physiologicalReaction direction="right-to-left" evidence="1">
        <dbReference type="Rhea" id="RHEA:28492"/>
    </physiologicalReaction>
</comment>
<comment type="subcellular location">
    <subcellularLocation>
        <location evidence="1">Cell inner membrane</location>
        <topology evidence="1">Multi-pass membrane protein</topology>
    </subcellularLocation>
</comment>
<comment type="similarity">
    <text evidence="1">Belongs to the HAK/KUP transporter (TC 2.A.72) family.</text>
</comment>
<gene>
    <name evidence="1" type="primary">kup</name>
    <name type="ordered locus">Nmul_A0201</name>
</gene>
<protein>
    <recommendedName>
        <fullName evidence="1">Probable potassium transport system protein Kup</fullName>
    </recommendedName>
</protein>
<name>KUP_NITMU</name>
<sequence>MTNQQMPSGHSLERQPLSLLCLAALGVVYGDIGTSPLYVMKTVFDPIHGLAVTESNVIGIISLIFWTIMIVVSLKYVTLILRADNHGEGGIMALLSLASSSVTDRPRLHNILFLIGAFGAALFFGDGVITPAISVLSAVEGLEVATPLLQPYVLPITVVVLIALFMLQQRGTGGIGALFGPVMVIWFVSLGLVGLINIAGAPQIVAAFNPMYAFAFCISNGWLAFIALGAVVLAVTGGEALYADMGHFGAKPIRLAWYGGVLPALTLNYLGQGALLLANPAAISNPFFLLFPSWALYGAVGLATAATVIASQSVISGVFSVTRQAIQLGFLPRMQIRHTSERKIGQIYIPFVNWTLLSVVLMAVLGFGSSSNLASAYGVAVTTTMVIETTLTFFVLRYVWNYPFLLGILVTAFFLAIDSAFFSATILKVAQGGWFPLVIGSVIFFIMITWSRGRQMLVDHLRSVAIPLQSFLESLIAHPPTRVAGTSVFLTANPDGVPHALLHNLAHNQVLHERVVFLTVTYQETPWVPVEQRISIKPLMENCYQITVRYGFKDEANLPYALELCEPHGLVFEPLRTSYFLSREIVVPSPGTGMSLWRERLFAAMVRNASNAAEYFKLPANRVLELGARVEI</sequence>
<evidence type="ECO:0000255" key="1">
    <source>
        <dbReference type="HAMAP-Rule" id="MF_01522"/>
    </source>
</evidence>
<reference key="1">
    <citation type="submission" date="2005-08" db="EMBL/GenBank/DDBJ databases">
        <title>Complete sequence of chromosome 1 of Nitrosospira multiformis ATCC 25196.</title>
        <authorList>
            <person name="Copeland A."/>
            <person name="Lucas S."/>
            <person name="Lapidus A."/>
            <person name="Barry K."/>
            <person name="Detter J.C."/>
            <person name="Glavina T."/>
            <person name="Hammon N."/>
            <person name="Israni S."/>
            <person name="Pitluck S."/>
            <person name="Chain P."/>
            <person name="Malfatti S."/>
            <person name="Shin M."/>
            <person name="Vergez L."/>
            <person name="Schmutz J."/>
            <person name="Larimer F."/>
            <person name="Land M."/>
            <person name="Hauser L."/>
            <person name="Kyrpides N."/>
            <person name="Lykidis A."/>
            <person name="Richardson P."/>
        </authorList>
    </citation>
    <scope>NUCLEOTIDE SEQUENCE [LARGE SCALE GENOMIC DNA]</scope>
    <source>
        <strain>ATCC 25196 / NCIMB 11849 / C 71</strain>
    </source>
</reference>
<accession>Q2YCL2</accession>
<feature type="chain" id="PRO_0000279805" description="Probable potassium transport system protein Kup">
    <location>
        <begin position="1"/>
        <end position="632"/>
    </location>
</feature>
<feature type="transmembrane region" description="Helical" evidence="1">
    <location>
        <begin position="19"/>
        <end position="39"/>
    </location>
</feature>
<feature type="transmembrane region" description="Helical" evidence="1">
    <location>
        <begin position="57"/>
        <end position="77"/>
    </location>
</feature>
<feature type="transmembrane region" description="Helical" evidence="1">
    <location>
        <begin position="111"/>
        <end position="131"/>
    </location>
</feature>
<feature type="transmembrane region" description="Helical" evidence="1">
    <location>
        <begin position="147"/>
        <end position="167"/>
    </location>
</feature>
<feature type="transmembrane region" description="Helical" evidence="1">
    <location>
        <begin position="175"/>
        <end position="195"/>
    </location>
</feature>
<feature type="transmembrane region" description="Helical" evidence="1">
    <location>
        <begin position="213"/>
        <end position="233"/>
    </location>
</feature>
<feature type="transmembrane region" description="Helical" evidence="1">
    <location>
        <begin position="257"/>
        <end position="277"/>
    </location>
</feature>
<feature type="transmembrane region" description="Helical" evidence="1">
    <location>
        <begin position="286"/>
        <end position="306"/>
    </location>
</feature>
<feature type="transmembrane region" description="Helical" evidence="1">
    <location>
        <begin position="347"/>
        <end position="367"/>
    </location>
</feature>
<feature type="transmembrane region" description="Helical" evidence="1">
    <location>
        <begin position="376"/>
        <end position="396"/>
    </location>
</feature>
<feature type="transmembrane region" description="Helical" evidence="1">
    <location>
        <begin position="404"/>
        <end position="424"/>
    </location>
</feature>
<feature type="transmembrane region" description="Helical" evidence="1">
    <location>
        <begin position="429"/>
        <end position="449"/>
    </location>
</feature>
<keyword id="KW-0997">Cell inner membrane</keyword>
<keyword id="KW-1003">Cell membrane</keyword>
<keyword id="KW-0406">Ion transport</keyword>
<keyword id="KW-0472">Membrane</keyword>
<keyword id="KW-0630">Potassium</keyword>
<keyword id="KW-0633">Potassium transport</keyword>
<keyword id="KW-1185">Reference proteome</keyword>
<keyword id="KW-0769">Symport</keyword>
<keyword id="KW-0812">Transmembrane</keyword>
<keyword id="KW-1133">Transmembrane helix</keyword>
<keyword id="KW-0813">Transport</keyword>
<organism>
    <name type="scientific">Nitrosospira multiformis (strain ATCC 25196 / NCIMB 11849 / C 71)</name>
    <dbReference type="NCBI Taxonomy" id="323848"/>
    <lineage>
        <taxon>Bacteria</taxon>
        <taxon>Pseudomonadati</taxon>
        <taxon>Pseudomonadota</taxon>
        <taxon>Betaproteobacteria</taxon>
        <taxon>Nitrosomonadales</taxon>
        <taxon>Nitrosomonadaceae</taxon>
        <taxon>Nitrosospira</taxon>
    </lineage>
</organism>
<proteinExistence type="inferred from homology"/>